<keyword id="KW-0963">Cytoplasm</keyword>
<keyword id="KW-0489">Methyltransferase</keyword>
<keyword id="KW-0698">rRNA processing</keyword>
<keyword id="KW-0949">S-adenosyl-L-methionine</keyword>
<keyword id="KW-0808">Transferase</keyword>
<reference key="1">
    <citation type="journal article" date="2004" name="Nat. Genet.">
        <title>Evidence in the Legionella pneumophila genome for exploitation of host cell functions and high genome plasticity.</title>
        <authorList>
            <person name="Cazalet C."/>
            <person name="Rusniok C."/>
            <person name="Brueggemann H."/>
            <person name="Zidane N."/>
            <person name="Magnier A."/>
            <person name="Ma L."/>
            <person name="Tichit M."/>
            <person name="Jarraud S."/>
            <person name="Bouchier C."/>
            <person name="Vandenesch F."/>
            <person name="Kunst F."/>
            <person name="Etienne J."/>
            <person name="Glaser P."/>
            <person name="Buchrieser C."/>
        </authorList>
    </citation>
    <scope>NUCLEOTIDE SEQUENCE [LARGE SCALE GENOMIC DNA]</scope>
    <source>
        <strain>Lens</strain>
    </source>
</reference>
<proteinExistence type="inferred from homology"/>
<evidence type="ECO:0000255" key="1">
    <source>
        <dbReference type="HAMAP-Rule" id="MF_00074"/>
    </source>
</evidence>
<name>RSMG_LEGPL</name>
<gene>
    <name evidence="1" type="primary">rsmG</name>
    <name type="ordered locus">lpl2803</name>
</gene>
<protein>
    <recommendedName>
        <fullName evidence="1">Ribosomal RNA small subunit methyltransferase G</fullName>
        <ecNumber evidence="1">2.1.1.170</ecNumber>
    </recommendedName>
    <alternativeName>
        <fullName evidence="1">16S rRNA 7-methylguanosine methyltransferase</fullName>
        <shortName evidence="1">16S rRNA m7G methyltransferase</shortName>
    </alternativeName>
</protein>
<dbReference type="EC" id="2.1.1.170" evidence="1"/>
<dbReference type="EMBL" id="CR628337">
    <property type="protein sequence ID" value="CAH17046.1"/>
    <property type="molecule type" value="Genomic_DNA"/>
</dbReference>
<dbReference type="RefSeq" id="WP_011216722.1">
    <property type="nucleotide sequence ID" value="NC_006369.1"/>
</dbReference>
<dbReference type="SMR" id="Q5WSS3"/>
<dbReference type="KEGG" id="lpf:lpl2803"/>
<dbReference type="LegioList" id="lpl2803"/>
<dbReference type="HOGENOM" id="CLU_065341_2_0_6"/>
<dbReference type="Proteomes" id="UP000002517">
    <property type="component" value="Chromosome"/>
</dbReference>
<dbReference type="GO" id="GO:0005829">
    <property type="term" value="C:cytosol"/>
    <property type="evidence" value="ECO:0007669"/>
    <property type="project" value="TreeGrafter"/>
</dbReference>
<dbReference type="GO" id="GO:0070043">
    <property type="term" value="F:rRNA (guanine-N7-)-methyltransferase activity"/>
    <property type="evidence" value="ECO:0007669"/>
    <property type="project" value="UniProtKB-UniRule"/>
</dbReference>
<dbReference type="CDD" id="cd02440">
    <property type="entry name" value="AdoMet_MTases"/>
    <property type="match status" value="1"/>
</dbReference>
<dbReference type="Gene3D" id="3.40.50.150">
    <property type="entry name" value="Vaccinia Virus protein VP39"/>
    <property type="match status" value="1"/>
</dbReference>
<dbReference type="HAMAP" id="MF_00074">
    <property type="entry name" value="16SrRNA_methyltr_G"/>
    <property type="match status" value="1"/>
</dbReference>
<dbReference type="InterPro" id="IPR003682">
    <property type="entry name" value="rRNA_ssu_MeTfrase_G"/>
</dbReference>
<dbReference type="InterPro" id="IPR029063">
    <property type="entry name" value="SAM-dependent_MTases_sf"/>
</dbReference>
<dbReference type="NCBIfam" id="TIGR00138">
    <property type="entry name" value="rsmG_gidB"/>
    <property type="match status" value="1"/>
</dbReference>
<dbReference type="PANTHER" id="PTHR31760">
    <property type="entry name" value="S-ADENOSYL-L-METHIONINE-DEPENDENT METHYLTRANSFERASES SUPERFAMILY PROTEIN"/>
    <property type="match status" value="1"/>
</dbReference>
<dbReference type="PANTHER" id="PTHR31760:SF0">
    <property type="entry name" value="S-ADENOSYL-L-METHIONINE-DEPENDENT METHYLTRANSFERASES SUPERFAMILY PROTEIN"/>
    <property type="match status" value="1"/>
</dbReference>
<dbReference type="Pfam" id="PF02527">
    <property type="entry name" value="GidB"/>
    <property type="match status" value="1"/>
</dbReference>
<dbReference type="PIRSF" id="PIRSF003078">
    <property type="entry name" value="GidB"/>
    <property type="match status" value="1"/>
</dbReference>
<dbReference type="SUPFAM" id="SSF53335">
    <property type="entry name" value="S-adenosyl-L-methionine-dependent methyltransferases"/>
    <property type="match status" value="1"/>
</dbReference>
<comment type="function">
    <text evidence="1">Specifically methylates the N7 position of guanine in position 527 of 16S rRNA.</text>
</comment>
<comment type="catalytic activity">
    <reaction evidence="1">
        <text>guanosine(527) in 16S rRNA + S-adenosyl-L-methionine = N(7)-methylguanosine(527) in 16S rRNA + S-adenosyl-L-homocysteine</text>
        <dbReference type="Rhea" id="RHEA:42732"/>
        <dbReference type="Rhea" id="RHEA-COMP:10209"/>
        <dbReference type="Rhea" id="RHEA-COMP:10210"/>
        <dbReference type="ChEBI" id="CHEBI:57856"/>
        <dbReference type="ChEBI" id="CHEBI:59789"/>
        <dbReference type="ChEBI" id="CHEBI:74269"/>
        <dbReference type="ChEBI" id="CHEBI:74480"/>
        <dbReference type="EC" id="2.1.1.170"/>
    </reaction>
</comment>
<comment type="subcellular location">
    <subcellularLocation>
        <location evidence="1">Cytoplasm</location>
    </subcellularLocation>
</comment>
<comment type="similarity">
    <text evidence="1">Belongs to the methyltransferase superfamily. RNA methyltransferase RsmG family.</text>
</comment>
<sequence>MIDNTKIRSLLEEGLTVFQLDSIGDLLLDFLLLLNKWNKTYNLTAIRDIETMVSKHLFDSLAILPWIKGNHIIDVGTGPGLPGIPLAIAKPDLQFVLLDSNGKKISFLNEVKRQLNIKNIEPIQIRVENYHPNQGFDTVISRAFSSLEQMIKWTQHLVAQDGLWLAMKGRFPDTELVPIHQTYRVERYAVPGIEGERCCVLINNTNKE</sequence>
<feature type="chain" id="PRO_0000184270" description="Ribosomal RNA small subunit methyltransferase G">
    <location>
        <begin position="1"/>
        <end position="208"/>
    </location>
</feature>
<feature type="binding site" evidence="1">
    <location>
        <position position="76"/>
    </location>
    <ligand>
        <name>S-adenosyl-L-methionine</name>
        <dbReference type="ChEBI" id="CHEBI:59789"/>
    </ligand>
</feature>
<feature type="binding site" evidence="1">
    <location>
        <position position="81"/>
    </location>
    <ligand>
        <name>S-adenosyl-L-methionine</name>
        <dbReference type="ChEBI" id="CHEBI:59789"/>
    </ligand>
</feature>
<feature type="binding site" evidence="1">
    <location>
        <begin position="127"/>
        <end position="128"/>
    </location>
    <ligand>
        <name>S-adenosyl-L-methionine</name>
        <dbReference type="ChEBI" id="CHEBI:59789"/>
    </ligand>
</feature>
<feature type="binding site" evidence="1">
    <location>
        <position position="142"/>
    </location>
    <ligand>
        <name>S-adenosyl-L-methionine</name>
        <dbReference type="ChEBI" id="CHEBI:59789"/>
    </ligand>
</feature>
<organism>
    <name type="scientific">Legionella pneumophila (strain Lens)</name>
    <dbReference type="NCBI Taxonomy" id="297245"/>
    <lineage>
        <taxon>Bacteria</taxon>
        <taxon>Pseudomonadati</taxon>
        <taxon>Pseudomonadota</taxon>
        <taxon>Gammaproteobacteria</taxon>
        <taxon>Legionellales</taxon>
        <taxon>Legionellaceae</taxon>
        <taxon>Legionella</taxon>
    </lineage>
</organism>
<accession>Q5WSS3</accession>